<accession>Q4WPX2</accession>
<accession>A7YMT1</accession>
<feature type="chain" id="PRO_0000416227" description="Psi-producing oxygenase A">
    <location>
        <begin position="1"/>
        <end position="1079"/>
    </location>
</feature>
<feature type="region of interest" description="Linoleate 8R-lipoxygenase" evidence="1">
    <location>
        <begin position="105"/>
        <end position="446"/>
    </location>
</feature>
<feature type="region of interest" description="9,12-octadecadienoate 8-hydroperoxide 8R-isomerase" evidence="1">
    <location>
        <begin position="654"/>
        <end position="1079"/>
    </location>
</feature>
<feature type="active site" evidence="2">
    <location>
        <position position="374"/>
    </location>
</feature>
<feature type="binding site" description="axial binding residue" evidence="3">
    <location>
        <position position="202"/>
    </location>
    <ligand>
        <name>heme b</name>
        <dbReference type="ChEBI" id="CHEBI:60344"/>
    </ligand>
    <ligandPart>
        <name>Fe</name>
        <dbReference type="ChEBI" id="CHEBI:18248"/>
    </ligandPart>
</feature>
<feature type="binding site" description="axial binding residue" evidence="3">
    <location>
        <position position="377"/>
    </location>
    <ligand>
        <name>heme b</name>
        <dbReference type="ChEBI" id="CHEBI:60344"/>
    </ligand>
    <ligandPart>
        <name>Fe</name>
        <dbReference type="ChEBI" id="CHEBI:18248"/>
    </ligandPart>
</feature>
<proteinExistence type="evidence at transcript level"/>
<dbReference type="EC" id="1.13.11.60"/>
<dbReference type="EC" id="5.4.4.5"/>
<dbReference type="EMBL" id="EU020166">
    <property type="protein sequence ID" value="ABV21631.1"/>
    <property type="molecule type" value="mRNA"/>
</dbReference>
<dbReference type="EMBL" id="AAHF01000005">
    <property type="protein sequence ID" value="EAL89712.1"/>
    <property type="molecule type" value="Genomic_DNA"/>
</dbReference>
<dbReference type="RefSeq" id="XP_751750.1">
    <property type="nucleotide sequence ID" value="XM_746657.1"/>
</dbReference>
<dbReference type="SMR" id="Q4WPX2"/>
<dbReference type="STRING" id="330879.Q4WPX2"/>
<dbReference type="PeroxiBase" id="5289">
    <property type="entry name" value="AfumLDS01"/>
</dbReference>
<dbReference type="EnsemblFungi" id="EAL89712">
    <property type="protein sequence ID" value="EAL89712"/>
    <property type="gene ID" value="AFUA_4G10770"/>
</dbReference>
<dbReference type="GeneID" id="3509289"/>
<dbReference type="KEGG" id="afm:AFUA_4G10770"/>
<dbReference type="VEuPathDB" id="FungiDB:Afu4g10770"/>
<dbReference type="eggNOG" id="KOG2408">
    <property type="taxonomic scope" value="Eukaryota"/>
</dbReference>
<dbReference type="HOGENOM" id="CLU_002329_1_0_1"/>
<dbReference type="InParanoid" id="Q4WPX2"/>
<dbReference type="OMA" id="KIQWDGD"/>
<dbReference type="OrthoDB" id="823504at2759"/>
<dbReference type="PHI-base" id="PHI:494"/>
<dbReference type="Proteomes" id="UP000002530">
    <property type="component" value="Chromosome 4"/>
</dbReference>
<dbReference type="GO" id="GO:0051213">
    <property type="term" value="F:dioxygenase activity"/>
    <property type="evidence" value="ECO:0000314"/>
    <property type="project" value="AspGD"/>
</dbReference>
<dbReference type="GO" id="GO:0020037">
    <property type="term" value="F:heme binding"/>
    <property type="evidence" value="ECO:0007669"/>
    <property type="project" value="InterPro"/>
</dbReference>
<dbReference type="GO" id="GO:0005506">
    <property type="term" value="F:iron ion binding"/>
    <property type="evidence" value="ECO:0007669"/>
    <property type="project" value="InterPro"/>
</dbReference>
<dbReference type="GO" id="GO:0016853">
    <property type="term" value="F:isomerase activity"/>
    <property type="evidence" value="ECO:0007669"/>
    <property type="project" value="UniProtKB-KW"/>
</dbReference>
<dbReference type="GO" id="GO:0052878">
    <property type="term" value="F:linoleate 8R-lipoxygenase activity"/>
    <property type="evidence" value="ECO:0007669"/>
    <property type="project" value="UniProtKB-EC"/>
</dbReference>
<dbReference type="GO" id="GO:0004497">
    <property type="term" value="F:monooxygenase activity"/>
    <property type="evidence" value="ECO:0007669"/>
    <property type="project" value="InterPro"/>
</dbReference>
<dbReference type="GO" id="GO:0016705">
    <property type="term" value="F:oxidoreductase activity, acting on paired donors, with incorporation or reduction of molecular oxygen"/>
    <property type="evidence" value="ECO:0007669"/>
    <property type="project" value="InterPro"/>
</dbReference>
<dbReference type="GO" id="GO:0004601">
    <property type="term" value="F:peroxidase activity"/>
    <property type="evidence" value="ECO:0007669"/>
    <property type="project" value="UniProtKB-KW"/>
</dbReference>
<dbReference type="GO" id="GO:0031408">
    <property type="term" value="P:oxylipin biosynthetic process"/>
    <property type="evidence" value="ECO:0000315"/>
    <property type="project" value="AspGD"/>
</dbReference>
<dbReference type="GO" id="GO:0001516">
    <property type="term" value="P:prostaglandin biosynthetic process"/>
    <property type="evidence" value="ECO:0000315"/>
    <property type="project" value="AspGD"/>
</dbReference>
<dbReference type="GO" id="GO:0006979">
    <property type="term" value="P:response to oxidative stress"/>
    <property type="evidence" value="ECO:0007669"/>
    <property type="project" value="InterPro"/>
</dbReference>
<dbReference type="CDD" id="cd20612">
    <property type="entry name" value="CYP_LDS-like_C"/>
    <property type="match status" value="1"/>
</dbReference>
<dbReference type="CDD" id="cd09817">
    <property type="entry name" value="linoleate_diol_synthase_like"/>
    <property type="match status" value="1"/>
</dbReference>
<dbReference type="FunFam" id="1.10.630.10:FF:000058">
    <property type="entry name" value="Fatty acid oxygenase"/>
    <property type="match status" value="1"/>
</dbReference>
<dbReference type="FunFam" id="1.10.640.10:FF:000005">
    <property type="entry name" value="Fatty acid oxygenase"/>
    <property type="match status" value="1"/>
</dbReference>
<dbReference type="Gene3D" id="1.10.630.10">
    <property type="entry name" value="Cytochrome P450"/>
    <property type="match status" value="1"/>
</dbReference>
<dbReference type="Gene3D" id="1.10.640.10">
    <property type="entry name" value="Haem peroxidase domain superfamily, animal type"/>
    <property type="match status" value="1"/>
</dbReference>
<dbReference type="InterPro" id="IPR001128">
    <property type="entry name" value="Cyt_P450"/>
</dbReference>
<dbReference type="InterPro" id="IPR017972">
    <property type="entry name" value="Cyt_P450_CS"/>
</dbReference>
<dbReference type="InterPro" id="IPR036396">
    <property type="entry name" value="Cyt_P450_sf"/>
</dbReference>
<dbReference type="InterPro" id="IPR019791">
    <property type="entry name" value="Haem_peroxidase_animal"/>
</dbReference>
<dbReference type="InterPro" id="IPR010255">
    <property type="entry name" value="Haem_peroxidase_sf"/>
</dbReference>
<dbReference type="InterPro" id="IPR037120">
    <property type="entry name" value="Haem_peroxidase_sf_animal"/>
</dbReference>
<dbReference type="InterPro" id="IPR050783">
    <property type="entry name" value="Oxylipin_biosynth_metab"/>
</dbReference>
<dbReference type="InterPro" id="IPR034812">
    <property type="entry name" value="Ppo-like_N"/>
</dbReference>
<dbReference type="PANTHER" id="PTHR11903">
    <property type="entry name" value="PROSTAGLANDIN G/H SYNTHASE"/>
    <property type="match status" value="1"/>
</dbReference>
<dbReference type="PANTHER" id="PTHR11903:SF37">
    <property type="entry name" value="PSI-PRODUCING OXYGENASE A"/>
    <property type="match status" value="1"/>
</dbReference>
<dbReference type="Pfam" id="PF03098">
    <property type="entry name" value="An_peroxidase"/>
    <property type="match status" value="2"/>
</dbReference>
<dbReference type="Pfam" id="PF00067">
    <property type="entry name" value="p450"/>
    <property type="match status" value="1"/>
</dbReference>
<dbReference type="SUPFAM" id="SSF48264">
    <property type="entry name" value="Cytochrome P450"/>
    <property type="match status" value="1"/>
</dbReference>
<dbReference type="SUPFAM" id="SSF48113">
    <property type="entry name" value="Heme-dependent peroxidases"/>
    <property type="match status" value="1"/>
</dbReference>
<dbReference type="PROSITE" id="PS00086">
    <property type="entry name" value="CYTOCHROME_P450"/>
    <property type="match status" value="1"/>
</dbReference>
<dbReference type="PROSITE" id="PS50292">
    <property type="entry name" value="PEROXIDASE_3"/>
    <property type="match status" value="1"/>
</dbReference>
<comment type="function">
    <text evidence="4">Bifunctional heme-containing enzyme that oxidizes linoleic acid to (8R,9Z,12Z)-8-hydroperoxyoctadeca-9,12-dienoate (within the N-terminal heme peroxidase domain), which is subsequently isomerized to (5S,8R,9Z,12Z)-5,8-dihydroxyoctadeca-9,12-dienoate (within the C-terminal P450 heme thiolate domain). Oxidized unsaturated fatty acids, so-called oxylipins, derived from endogenous fatty acids, influence the development of the asexual conidiophores and sexual cleistothecia and regulate the secondary metabolism. These substances were collectively named psi factors and are primarily a mixture of hydroxylated oleic, linoleic and alpha-linolenic acids. They are termed psi-beta, psi-alpha, and psi-gamma, respectively. Oxylipins may also serve as activators of mammalian immune responses contributing to enhanced resistance to opportunistic fungi and as factors that modulate fungal development contributing to resistance to host defenses.</text>
</comment>
<comment type="catalytic activity">
    <reaction>
        <text>(9Z,12Z)-octadecadienoate + O2 = (8R,9Z,12Z)-8-hydroperoxyoctadeca-9,12-dienoate</text>
        <dbReference type="Rhea" id="RHEA:25395"/>
        <dbReference type="ChEBI" id="CHEBI:15379"/>
        <dbReference type="ChEBI" id="CHEBI:30245"/>
        <dbReference type="ChEBI" id="CHEBI:58659"/>
        <dbReference type="EC" id="1.13.11.60"/>
    </reaction>
</comment>
<comment type="catalytic activity">
    <reaction>
        <text>(8R,9Z,12Z)-8-hydroperoxyoctadeca-9,12-dienoate = (5S,8R,9Z,12Z)-5,8-dihydroxyoctadeca-9,12-dienoate</text>
        <dbReference type="Rhea" id="RHEA:31579"/>
        <dbReference type="ChEBI" id="CHEBI:58659"/>
        <dbReference type="ChEBI" id="CHEBI:63217"/>
        <dbReference type="EC" id="5.4.4.5"/>
    </reaction>
</comment>
<comment type="cofactor">
    <cofactor evidence="1">
        <name>heme b</name>
        <dbReference type="ChEBI" id="CHEBI:60344"/>
    </cofactor>
</comment>
<comment type="subunit">
    <text evidence="1">Homotetramer.</text>
</comment>
<comment type="similarity">
    <text evidence="3">Belongs to the peroxidase family.</text>
</comment>
<evidence type="ECO:0000250" key="1"/>
<evidence type="ECO:0000255" key="2"/>
<evidence type="ECO:0000255" key="3">
    <source>
        <dbReference type="PROSITE-ProRule" id="PRU00298"/>
    </source>
</evidence>
<evidence type="ECO:0000269" key="4">
    <source>
    </source>
</evidence>
<organism>
    <name type="scientific">Aspergillus fumigatus (strain ATCC MYA-4609 / CBS 101355 / FGSC A1100 / Af293)</name>
    <name type="common">Neosartorya fumigata</name>
    <dbReference type="NCBI Taxonomy" id="330879"/>
    <lineage>
        <taxon>Eukaryota</taxon>
        <taxon>Fungi</taxon>
        <taxon>Dikarya</taxon>
        <taxon>Ascomycota</taxon>
        <taxon>Pezizomycotina</taxon>
        <taxon>Eurotiomycetes</taxon>
        <taxon>Eurotiomycetidae</taxon>
        <taxon>Eurotiales</taxon>
        <taxon>Aspergillaceae</taxon>
        <taxon>Aspergillus</taxon>
        <taxon>Aspergillus subgen. Fumigati</taxon>
    </lineage>
</organism>
<protein>
    <recommendedName>
        <fullName>Psi-producing oxygenase A</fullName>
    </recommendedName>
    <alternativeName>
        <fullName>Fatty acid oxygenase ppoA</fullName>
    </alternativeName>
    <domain>
        <recommendedName>
            <fullName>Linoleate 8R-lipoxygenase</fullName>
            <ecNumber>1.13.11.60</ecNumber>
        </recommendedName>
    </domain>
    <domain>
        <recommendedName>
            <fullName>9,12-octadecadienoate 8-hydroperoxide 8R-isomerase</fullName>
            <ecNumber>5.4.4.5</ecNumber>
        </recommendedName>
    </domain>
</protein>
<keyword id="KW-0223">Dioxygenase</keyword>
<keyword id="KW-0349">Heme</keyword>
<keyword id="KW-0408">Iron</keyword>
<keyword id="KW-0413">Isomerase</keyword>
<keyword id="KW-0479">Metal-binding</keyword>
<keyword id="KW-0511">Multifunctional enzyme</keyword>
<keyword id="KW-0560">Oxidoreductase</keyword>
<keyword id="KW-0575">Peroxidase</keyword>
<keyword id="KW-1185">Reference proteome</keyword>
<keyword id="KW-0843">Virulence</keyword>
<gene>
    <name type="primary">ppoA</name>
    <name type="ORF">AFUA_4G10770</name>
</gene>
<sequence>MSEKQTGSANGGLGKTLAQLEQVVSASLRPLPSQTGDGTYVTEQVKTGILKDLSHVDLGDLKTLVDVSKSALTGEALDDRKYIMERVIQLSAGLPSTSQIGKELTNTFLTTLWNDLEHPPISYLGRDAMYRRADGSGNNVLWPHIGAAGTPYARSVQPKTVQSPNLPDPETLFDCLLARKEYKEHPNKISSVLFYIASIIIHDLFETDRKDPAISLTSSYLDLSPLYGNNQQEQDLIRTFKDGKLKPDCFSTKRVLGFPPDVGVVLIMFNRFHNYVVEKLAMINEGGRFTKPQESDTAAYAKYDNDLFQTGRLVTCGLYVNIILKDYVRTILNINRTDSIWSLDPRSEMKDGLLGRAAAQATGNQVAAEFNLVYRWHSCISQRDQKWTEDMYQELFPGQDPSKISLQDFLRGLGRWEAKLPGEPRERPFAGLQRKADGSYDDNDLVKIFEESVEDCAGAFGALHVPTVFRSIEALGIQQARSWNLATLNEFRKYFNLAPYKTFEEINSDPYVADQLKRLYDHPDRVEIYPGIIVEDAKESMAPGSGLCTNFTISRAILSDAVALVRGDRFHTVDFTPKHLTNWAYNEIQPQDSVDQTHVFYKLVLRAFPNHFRGDSIYAHFPLVVPSENKKILTKLGTADKYSWDRPNYTPPPQFINSHSACMSILSDQETFKVTWGSKIEFLMRHNNQPYGRDFMLSGDRTPNAMSRQMMGKALYRDKWETEVKRFYENITLKLLHRYSYKLAGVNQVDVVRDIANLAQVHFCASVFSLPLKTESNPRGIFTESELYQIMAVVFTSIFYDADIGKSFELNQAARAVTQQLGQLTLANVELIAKTGFIANLVNSLHRHDVLSEYGVHMIQRLLDSGMPAPEIVWTHVLPTAGGMVANQAQLFSQSLDYYLSEEGSVHLPEINRLAKEDTTEADDLLLRYFMEGARIRSSVALPRVVAQPTVVEDNGQKITLKQGQHIICNLVSASMDPVTFPEPDKVKLDRDMNLYAHFGFGPHQCLGLGLCKTALTTMLKVIGRLDNLRRAPGGQGKLKKLSGPGGIAMYMTPDQTAFFPFPTTMKIQWDGDLPEVKE</sequence>
<name>PPOA_ASPFU</name>
<reference key="1">
    <citation type="journal article" date="2005" name="Infect. Immun.">
        <title>Aspergillus cyclooxygenase-like enzymes are associated with prostaglandin production and virulence.</title>
        <authorList>
            <person name="Tsitsigiannis D.I."/>
            <person name="Bok J.W."/>
            <person name="Andes D."/>
            <person name="Nielsen K.F."/>
            <person name="Frisvad J.C."/>
            <person name="Keller N.P."/>
        </authorList>
    </citation>
    <scope>NUCLEOTIDE SEQUENCE [MRNA]</scope>
    <scope>FUNCTION</scope>
    <source>
        <strain>ATCC MYA-4609 / CBS 101355 / FGSC A1100 / Af293</strain>
    </source>
</reference>
<reference key="2">
    <citation type="journal article" date="2005" name="Nature">
        <title>Genomic sequence of the pathogenic and allergenic filamentous fungus Aspergillus fumigatus.</title>
        <authorList>
            <person name="Nierman W.C."/>
            <person name="Pain A."/>
            <person name="Anderson M.J."/>
            <person name="Wortman J.R."/>
            <person name="Kim H.S."/>
            <person name="Arroyo J."/>
            <person name="Berriman M."/>
            <person name="Abe K."/>
            <person name="Archer D.B."/>
            <person name="Bermejo C."/>
            <person name="Bennett J.W."/>
            <person name="Bowyer P."/>
            <person name="Chen D."/>
            <person name="Collins M."/>
            <person name="Coulsen R."/>
            <person name="Davies R."/>
            <person name="Dyer P.S."/>
            <person name="Farman M.L."/>
            <person name="Fedorova N."/>
            <person name="Fedorova N.D."/>
            <person name="Feldblyum T.V."/>
            <person name="Fischer R."/>
            <person name="Fosker N."/>
            <person name="Fraser A."/>
            <person name="Garcia J.L."/>
            <person name="Garcia M.J."/>
            <person name="Goble A."/>
            <person name="Goldman G.H."/>
            <person name="Gomi K."/>
            <person name="Griffith-Jones S."/>
            <person name="Gwilliam R."/>
            <person name="Haas B.J."/>
            <person name="Haas H."/>
            <person name="Harris D.E."/>
            <person name="Horiuchi H."/>
            <person name="Huang J."/>
            <person name="Humphray S."/>
            <person name="Jimenez J."/>
            <person name="Keller N."/>
            <person name="Khouri H."/>
            <person name="Kitamoto K."/>
            <person name="Kobayashi T."/>
            <person name="Konzack S."/>
            <person name="Kulkarni R."/>
            <person name="Kumagai T."/>
            <person name="Lafton A."/>
            <person name="Latge J.-P."/>
            <person name="Li W."/>
            <person name="Lord A."/>
            <person name="Lu C."/>
            <person name="Majoros W.H."/>
            <person name="May G.S."/>
            <person name="Miller B.L."/>
            <person name="Mohamoud Y."/>
            <person name="Molina M."/>
            <person name="Monod M."/>
            <person name="Mouyna I."/>
            <person name="Mulligan S."/>
            <person name="Murphy L.D."/>
            <person name="O'Neil S."/>
            <person name="Paulsen I."/>
            <person name="Penalva M.A."/>
            <person name="Pertea M."/>
            <person name="Price C."/>
            <person name="Pritchard B.L."/>
            <person name="Quail M.A."/>
            <person name="Rabbinowitsch E."/>
            <person name="Rawlins N."/>
            <person name="Rajandream M.A."/>
            <person name="Reichard U."/>
            <person name="Renauld H."/>
            <person name="Robson G.D."/>
            <person name="Rodriguez de Cordoba S."/>
            <person name="Rodriguez-Pena J.M."/>
            <person name="Ronning C.M."/>
            <person name="Rutter S."/>
            <person name="Salzberg S.L."/>
            <person name="Sanchez M."/>
            <person name="Sanchez-Ferrero J.C."/>
            <person name="Saunders D."/>
            <person name="Seeger K."/>
            <person name="Squares R."/>
            <person name="Squares S."/>
            <person name="Takeuchi M."/>
            <person name="Tekaia F."/>
            <person name="Turner G."/>
            <person name="Vazquez de Aldana C.R."/>
            <person name="Weidman J."/>
            <person name="White O."/>
            <person name="Woodward J.R."/>
            <person name="Yu J.-H."/>
            <person name="Fraser C.M."/>
            <person name="Galagan J.E."/>
            <person name="Asai K."/>
            <person name="Machida M."/>
            <person name="Hall N."/>
            <person name="Barrell B.G."/>
            <person name="Denning D.W."/>
        </authorList>
    </citation>
    <scope>NUCLEOTIDE SEQUENCE [LARGE SCALE GENOMIC DNA]</scope>
    <source>
        <strain>ATCC MYA-4609 / CBS 101355 / FGSC A1100 / Af293</strain>
    </source>
</reference>